<evidence type="ECO:0000255" key="1">
    <source>
        <dbReference type="HAMAP-Rule" id="MF_04026"/>
    </source>
</evidence>
<evidence type="ECO:0000256" key="2">
    <source>
        <dbReference type="SAM" id="MobiDB-lite"/>
    </source>
</evidence>
<proteinExistence type="inferred from homology"/>
<dbReference type="EC" id="1.17.4.1" evidence="1"/>
<dbReference type="EMBL" id="AF148805">
    <property type="protein sequence ID" value="ABD28916.1"/>
    <property type="molecule type" value="Genomic_DNA"/>
</dbReference>
<dbReference type="RefSeq" id="YP_001129418.1">
    <property type="nucleotide sequence ID" value="NC_009333.1"/>
</dbReference>
<dbReference type="SMR" id="Q2HR67"/>
<dbReference type="DNASU" id="4961490"/>
<dbReference type="GeneID" id="4961490"/>
<dbReference type="KEGG" id="vg:4961490"/>
<dbReference type="Proteomes" id="UP000000942">
    <property type="component" value="Segment"/>
</dbReference>
<dbReference type="GO" id="GO:0005524">
    <property type="term" value="F:ATP binding"/>
    <property type="evidence" value="ECO:0007669"/>
    <property type="project" value="UniProtKB-UniRule"/>
</dbReference>
<dbReference type="GO" id="GO:0004748">
    <property type="term" value="F:ribonucleoside-diphosphate reductase activity, thioredoxin disulfide as acceptor"/>
    <property type="evidence" value="ECO:0007669"/>
    <property type="project" value="UniProtKB-UniRule"/>
</dbReference>
<dbReference type="GO" id="GO:0009263">
    <property type="term" value="P:deoxyribonucleotide biosynthetic process"/>
    <property type="evidence" value="ECO:0007669"/>
    <property type="project" value="InterPro"/>
</dbReference>
<dbReference type="GO" id="GO:0006260">
    <property type="term" value="P:DNA replication"/>
    <property type="evidence" value="ECO:0007669"/>
    <property type="project" value="UniProtKB-KW"/>
</dbReference>
<dbReference type="GO" id="GO:0016032">
    <property type="term" value="P:viral process"/>
    <property type="evidence" value="ECO:0007669"/>
    <property type="project" value="UniProtKB-UniRule"/>
</dbReference>
<dbReference type="Gene3D" id="3.20.70.20">
    <property type="match status" value="1"/>
</dbReference>
<dbReference type="HAMAP" id="MF_04026">
    <property type="entry name" value="HSV_RIR1"/>
    <property type="match status" value="1"/>
</dbReference>
<dbReference type="InterPro" id="IPR034717">
    <property type="entry name" value="HSV_RIR1"/>
</dbReference>
<dbReference type="InterPro" id="IPR013346">
    <property type="entry name" value="NrdE_NrdA_C"/>
</dbReference>
<dbReference type="InterPro" id="IPR000788">
    <property type="entry name" value="RNR_lg_C"/>
</dbReference>
<dbReference type="InterPro" id="IPR013509">
    <property type="entry name" value="RNR_lsu_N"/>
</dbReference>
<dbReference type="InterPro" id="IPR008926">
    <property type="entry name" value="RNR_R1-su_N"/>
</dbReference>
<dbReference type="InterPro" id="IPR039718">
    <property type="entry name" value="Rrm1"/>
</dbReference>
<dbReference type="NCBIfam" id="TIGR02506">
    <property type="entry name" value="NrdE_NrdA"/>
    <property type="match status" value="1"/>
</dbReference>
<dbReference type="PANTHER" id="PTHR11573">
    <property type="entry name" value="RIBONUCLEOSIDE-DIPHOSPHATE REDUCTASE LARGE CHAIN"/>
    <property type="match status" value="1"/>
</dbReference>
<dbReference type="PANTHER" id="PTHR11573:SF6">
    <property type="entry name" value="RIBONUCLEOSIDE-DIPHOSPHATE REDUCTASE LARGE SUBUNIT"/>
    <property type="match status" value="1"/>
</dbReference>
<dbReference type="Pfam" id="PF02867">
    <property type="entry name" value="Ribonuc_red_lgC"/>
    <property type="match status" value="1"/>
</dbReference>
<dbReference type="Pfam" id="PF00317">
    <property type="entry name" value="Ribonuc_red_lgN"/>
    <property type="match status" value="1"/>
</dbReference>
<dbReference type="PRINTS" id="PR01183">
    <property type="entry name" value="RIBORDTASEM1"/>
</dbReference>
<dbReference type="SUPFAM" id="SSF51998">
    <property type="entry name" value="PFL-like glycyl radical enzymes"/>
    <property type="match status" value="1"/>
</dbReference>
<dbReference type="SUPFAM" id="SSF48168">
    <property type="entry name" value="R1 subunit of ribonucleotide reductase, N-terminal domain"/>
    <property type="match status" value="1"/>
</dbReference>
<dbReference type="PROSITE" id="PS00089">
    <property type="entry name" value="RIBORED_LARGE"/>
    <property type="match status" value="1"/>
</dbReference>
<feature type="chain" id="PRO_0000423783" description="Ribonucleoside-diphosphate reductase large subunit">
    <location>
        <begin position="1"/>
        <end position="792"/>
    </location>
</feature>
<feature type="region of interest" description="Disordered" evidence="2">
    <location>
        <begin position="758"/>
        <end position="781"/>
    </location>
</feature>
<feature type="active site" description="Proton acceptor" evidence="1">
    <location>
        <position position="415"/>
    </location>
</feature>
<feature type="active site" description="Cysteine radical intermediate" evidence="1">
    <location>
        <position position="417"/>
    </location>
</feature>
<feature type="active site" description="Proton acceptor" evidence="1">
    <location>
        <position position="419"/>
    </location>
</feature>
<feature type="binding site" evidence="1">
    <location>
        <position position="200"/>
    </location>
    <ligand>
        <name>substrate</name>
    </ligand>
</feature>
<feature type="binding site" evidence="1">
    <location>
        <begin position="215"/>
        <end position="216"/>
    </location>
    <ligand>
        <name>substrate</name>
    </ligand>
</feature>
<feature type="binding site" evidence="1">
    <location>
        <position position="246"/>
    </location>
    <ligand>
        <name>substrate</name>
    </ligand>
</feature>
<feature type="binding site" evidence="1">
    <location>
        <begin position="415"/>
        <end position="419"/>
    </location>
    <ligand>
        <name>substrate</name>
    </ligand>
</feature>
<feature type="binding site" evidence="1">
    <location>
        <begin position="606"/>
        <end position="610"/>
    </location>
    <ligand>
        <name>substrate</name>
    </ligand>
</feature>
<feature type="site" description="Important for hydrogen atom transfer" evidence="1">
    <location>
        <position position="216"/>
    </location>
</feature>
<feature type="site" description="Important for hydrogen atom transfer" evidence="1">
    <location>
        <position position="431"/>
    </location>
</feature>
<feature type="site" description="Important for electron transfer" evidence="1">
    <location>
        <position position="737"/>
    </location>
</feature>
<feature type="site" description="Important for electron transfer" evidence="1">
    <location>
        <position position="738"/>
    </location>
</feature>
<feature type="site" description="Interacts with thioredoxin/glutaredoxin" evidence="1">
    <location>
        <position position="788"/>
    </location>
</feature>
<feature type="site" description="Interacts with thioredoxin/glutaredoxin" evidence="1">
    <location>
        <position position="791"/>
    </location>
</feature>
<feature type="disulfide bond" description="Redox-active" evidence="1">
    <location>
        <begin position="216"/>
        <end position="431"/>
    </location>
</feature>
<organism>
    <name type="scientific">Human herpesvirus 8 type P (isolate GK18)</name>
    <name type="common">HHV-8</name>
    <name type="synonym">Kaposi's sarcoma-associated herpesvirus</name>
    <dbReference type="NCBI Taxonomy" id="868565"/>
    <lineage>
        <taxon>Viruses</taxon>
        <taxon>Duplodnaviria</taxon>
        <taxon>Heunggongvirae</taxon>
        <taxon>Peploviricota</taxon>
        <taxon>Herviviricetes</taxon>
        <taxon>Herpesvirales</taxon>
        <taxon>Orthoherpesviridae</taxon>
        <taxon>Gammaherpesvirinae</taxon>
        <taxon>Rhadinovirus</taxon>
        <taxon>Rhadinovirus humangamma8</taxon>
        <taxon>Human herpesvirus 8</taxon>
    </lineage>
</organism>
<name>RIR1_HHV8P</name>
<comment type="function">
    <text evidence="1">Ribonucleoside-diphosphate reductase holoenzyme provides the precursors necessary for viral DNA synthesis. Allows virus growth in non-dividing cells, as well as reactivation from latency in infected hosts. Catalyzes the biosynthesis of deoxyribonucleotides from the corresponding ribonucleotides.</text>
</comment>
<comment type="catalytic activity">
    <reaction evidence="1">
        <text>a 2'-deoxyribonucleoside 5'-diphosphate + [thioredoxin]-disulfide + H2O = a ribonucleoside 5'-diphosphate + [thioredoxin]-dithiol</text>
        <dbReference type="Rhea" id="RHEA:23252"/>
        <dbReference type="Rhea" id="RHEA-COMP:10698"/>
        <dbReference type="Rhea" id="RHEA-COMP:10700"/>
        <dbReference type="ChEBI" id="CHEBI:15377"/>
        <dbReference type="ChEBI" id="CHEBI:29950"/>
        <dbReference type="ChEBI" id="CHEBI:50058"/>
        <dbReference type="ChEBI" id="CHEBI:57930"/>
        <dbReference type="ChEBI" id="CHEBI:73316"/>
        <dbReference type="EC" id="1.17.4.1"/>
    </reaction>
</comment>
<comment type="subunit">
    <text evidence="1">Heterotetramer composed of a homodimer of the large subunit (R1) and a homodimer of the small subunit (R2). Larger multisubunit protein complex are also active, composed of (R1)n(R2)n.</text>
</comment>
<comment type="similarity">
    <text evidence="1">Belongs to the ribonucleoside diphosphate reductase large chain family.</text>
</comment>
<accession>Q2HR67</accession>
<keyword id="KW-0067">ATP-binding</keyword>
<keyword id="KW-1015">Disulfide bond</keyword>
<keyword id="KW-0235">DNA replication</keyword>
<keyword id="KW-0244">Early protein</keyword>
<keyword id="KW-0945">Host-virus interaction</keyword>
<keyword id="KW-0547">Nucleotide-binding</keyword>
<keyword id="KW-0560">Oxidoreductase</keyword>
<keyword id="KW-1185">Reference proteome</keyword>
<gene>
    <name evidence="1" type="primary">RIR1</name>
    <name type="ordered locus">ORF61</name>
</gene>
<protein>
    <recommendedName>
        <fullName evidence="1">Ribonucleoside-diphosphate reductase large subunit</fullName>
        <shortName evidence="1">R1</shortName>
        <ecNumber evidence="1">1.17.4.1</ecNumber>
    </recommendedName>
    <alternativeName>
        <fullName evidence="1">Ribonucleotide reductase large subunit</fullName>
    </alternativeName>
</protein>
<reference key="1">
    <citation type="journal article" date="1999" name="J. Virol.">
        <title>Identification of a spliced gene from Kaposi's sarcoma-associated herpesvirus encoding a protein with similarities to latent membrane proteins 1 and 2A of Epstein-Barr virus.</title>
        <authorList>
            <person name="Glenn M."/>
            <person name="Rainbow L."/>
            <person name="Aurade F."/>
            <person name="Davison A."/>
            <person name="Schulz T.F."/>
        </authorList>
    </citation>
    <scope>NUCLEOTIDE SEQUENCE [LARGE SCALE GENOMIC DNA]</scope>
</reference>
<reference key="2">
    <citation type="journal article" date="2006" name="J. Gen. Virol.">
        <title>Kaposi's sarcoma-associated herpesvirus immune modulation: an overview.</title>
        <authorList>
            <person name="Rezaee S.A.R."/>
            <person name="Cunningham C."/>
            <person name="Davison A.J."/>
            <person name="Blackbourn D.J."/>
        </authorList>
    </citation>
    <scope>NUCLEOTIDE SEQUENCE [LARGE SCALE GENOMIC DNA]</scope>
</reference>
<sequence>MSVRTFCQVHLGAVPPERRGSQVSAGQLSDFDMCAQSLIDFLKVRVGWDVRANAMAGRLWHQIMEARCPATLKQYLGIFRGVLGHRVESFIQKNIDALEDMLCAYRRSKAYEDTLNCGYLSAVRLYDTYVLRTMGTEPVYESVAQMFMRVSVFVACQCLEHECLYWLARDLIEDAKSVSEMAIVEYVFGYLAAQHVCCATPILRSAGVEGGQLASCFILQPSMMNEPGTLDALYHDMSPLLASKSGVGLDVTSFSHQKNIASCLKLVDAQVHYFNDNNIRPVGASAYMELWHSQICDFLNAKLPENPDRCHSLFQGVCIPTLFFRMYEKDPSKLWYLFDPATAPNLIKLYGAAFDNEYERLVRAGKYVSCMPLKSMMFTLIHTIIKTGSPYVLLKEALNEHHWTDTQGMAINCSNLCAEIVQLPGRNTSVCNLANICLPKCLRTVESARVGTTDANRPFFCFEALGDAVRVAVLVINACILGGSHPTPGVERGQKERSMGIGVQGLADVFAELGYGYLDAESAELDKNIFQSMYYTAVETSHNLVLEGQGVPFHGWEVSNFAKGRFHWQTWEGEDASFVPRHRWDALGKSIAEHGIFNSQFLAVMPTAGTSQVTGYAESVYPFFANISSKVTNKEEVLRPNVTFFKKVLPDDLRVVRQYGGDVSTFPKHHRERYRVFLTAFDYCPFKLLDRARARAPFVDQSQSMSFFLKEDRVRNASYLRDLLLHGYRLGLKTLMYYCRVQKQSSLTALQCLADPGSPPHSGMKQDGAWLPGPKNPEEESCAADPECLVCQ</sequence>
<organismHost>
    <name type="scientific">Homo sapiens</name>
    <name type="common">Human</name>
    <dbReference type="NCBI Taxonomy" id="9606"/>
</organismHost>